<keyword id="KW-0143">Chaperone</keyword>
<keyword id="KW-0963">Cytoplasm</keyword>
<keyword id="KW-0342">GTP-binding</keyword>
<keyword id="KW-0996">Nickel insertion</keyword>
<keyword id="KW-0547">Nucleotide-binding</keyword>
<organism>
    <name type="scientific">Klebsiella pneumoniae subsp. pneumoniae (strain ATCC 700721 / MGH 78578)</name>
    <dbReference type="NCBI Taxonomy" id="272620"/>
    <lineage>
        <taxon>Bacteria</taxon>
        <taxon>Pseudomonadati</taxon>
        <taxon>Pseudomonadota</taxon>
        <taxon>Gammaproteobacteria</taxon>
        <taxon>Enterobacterales</taxon>
        <taxon>Enterobacteriaceae</taxon>
        <taxon>Klebsiella/Raoultella group</taxon>
        <taxon>Klebsiella</taxon>
        <taxon>Klebsiella pneumoniae complex</taxon>
    </lineage>
</organism>
<accession>A6TE45</accession>
<comment type="function">
    <text evidence="1">Facilitates the functional incorporation of the urease nickel metallocenter. This process requires GTP hydrolysis, probably effectuated by UreG.</text>
</comment>
<comment type="subunit">
    <text evidence="1">Homodimer. UreD, UreF and UreG form a complex that acts as a GTP-hydrolysis-dependent molecular chaperone, activating the urease apoprotein by helping to assemble the nickel containing metallocenter of UreC. The UreE protein probably delivers the nickel.</text>
</comment>
<comment type="subcellular location">
    <subcellularLocation>
        <location evidence="1">Cytoplasm</location>
    </subcellularLocation>
</comment>
<comment type="similarity">
    <text evidence="1">Belongs to the SIMIBI class G3E GTPase family. UreG subfamily.</text>
</comment>
<dbReference type="EMBL" id="CP000647">
    <property type="protein sequence ID" value="ABR78866.1"/>
    <property type="molecule type" value="Genomic_DNA"/>
</dbReference>
<dbReference type="RefSeq" id="WP_002916877.1">
    <property type="nucleotide sequence ID" value="NC_009648.1"/>
</dbReference>
<dbReference type="SMR" id="A6TE45"/>
<dbReference type="STRING" id="272620.KPN_03470"/>
<dbReference type="jPOST" id="A6TE45"/>
<dbReference type="PaxDb" id="272620-KPN_03470"/>
<dbReference type="EnsemblBacteria" id="ABR78866">
    <property type="protein sequence ID" value="ABR78866"/>
    <property type="gene ID" value="KPN_03470"/>
</dbReference>
<dbReference type="GeneID" id="93271251"/>
<dbReference type="KEGG" id="kpn:KPN_03470"/>
<dbReference type="HOGENOM" id="CLU_072144_1_0_6"/>
<dbReference type="Proteomes" id="UP000000265">
    <property type="component" value="Chromosome"/>
</dbReference>
<dbReference type="GO" id="GO:0005737">
    <property type="term" value="C:cytoplasm"/>
    <property type="evidence" value="ECO:0007669"/>
    <property type="project" value="UniProtKB-SubCell"/>
</dbReference>
<dbReference type="GO" id="GO:0005525">
    <property type="term" value="F:GTP binding"/>
    <property type="evidence" value="ECO:0007669"/>
    <property type="project" value="UniProtKB-KW"/>
</dbReference>
<dbReference type="GO" id="GO:0003924">
    <property type="term" value="F:GTPase activity"/>
    <property type="evidence" value="ECO:0007669"/>
    <property type="project" value="InterPro"/>
</dbReference>
<dbReference type="GO" id="GO:0016151">
    <property type="term" value="F:nickel cation binding"/>
    <property type="evidence" value="ECO:0007669"/>
    <property type="project" value="UniProtKB-UniRule"/>
</dbReference>
<dbReference type="GO" id="GO:0043419">
    <property type="term" value="P:urea catabolic process"/>
    <property type="evidence" value="ECO:0007669"/>
    <property type="project" value="InterPro"/>
</dbReference>
<dbReference type="CDD" id="cd05540">
    <property type="entry name" value="UreG"/>
    <property type="match status" value="1"/>
</dbReference>
<dbReference type="FunFam" id="3.40.50.300:FF:000208">
    <property type="entry name" value="Urease accessory protein UreG"/>
    <property type="match status" value="1"/>
</dbReference>
<dbReference type="Gene3D" id="3.40.50.300">
    <property type="entry name" value="P-loop containing nucleotide triphosphate hydrolases"/>
    <property type="match status" value="1"/>
</dbReference>
<dbReference type="HAMAP" id="MF_01389">
    <property type="entry name" value="UreG"/>
    <property type="match status" value="1"/>
</dbReference>
<dbReference type="InterPro" id="IPR003495">
    <property type="entry name" value="CobW/HypB/UreG_nucleotide-bd"/>
</dbReference>
<dbReference type="InterPro" id="IPR027417">
    <property type="entry name" value="P-loop_NTPase"/>
</dbReference>
<dbReference type="InterPro" id="IPR004400">
    <property type="entry name" value="UreG"/>
</dbReference>
<dbReference type="NCBIfam" id="TIGR00101">
    <property type="entry name" value="ureG"/>
    <property type="match status" value="1"/>
</dbReference>
<dbReference type="PANTHER" id="PTHR31715">
    <property type="entry name" value="UREASE ACCESSORY PROTEIN G"/>
    <property type="match status" value="1"/>
</dbReference>
<dbReference type="PANTHER" id="PTHR31715:SF0">
    <property type="entry name" value="UREASE ACCESSORY PROTEIN G"/>
    <property type="match status" value="1"/>
</dbReference>
<dbReference type="Pfam" id="PF02492">
    <property type="entry name" value="cobW"/>
    <property type="match status" value="1"/>
</dbReference>
<dbReference type="PIRSF" id="PIRSF005624">
    <property type="entry name" value="Ni-bind_GTPase"/>
    <property type="match status" value="1"/>
</dbReference>
<dbReference type="SUPFAM" id="SSF52540">
    <property type="entry name" value="P-loop containing nucleoside triphosphate hydrolases"/>
    <property type="match status" value="1"/>
</dbReference>
<protein>
    <recommendedName>
        <fullName evidence="1">Urease accessory protein UreG</fullName>
    </recommendedName>
</protein>
<proteinExistence type="inferred from homology"/>
<gene>
    <name evidence="1" type="primary">ureG</name>
    <name type="ordered locus">KPN78578_34050</name>
    <name type="ORF">KPN_03470</name>
</gene>
<evidence type="ECO:0000255" key="1">
    <source>
        <dbReference type="HAMAP-Rule" id="MF_01389"/>
    </source>
</evidence>
<name>UREG_KLEP7</name>
<sequence>MNSYKHPLRVGVGGPVGSGKTALLEALCKAMRDTWQLAVVTNDIYTKEDQRILTEAGALAPERIVGVETGGCPHTAIREDASMNLAAVEALSEKFGNLDLIFVESGGDNLSATFSPELADLTIYVIDVAEGEKIPRKGGPGITKSDFLVINKTDLAPYVGASLEVMASDTQRMRGDRPWTFTNLKQGDGLSTIIAFLEDKGMLGK</sequence>
<feature type="chain" id="PRO_0000347397" description="Urease accessory protein UreG">
    <location>
        <begin position="1"/>
        <end position="205"/>
    </location>
</feature>
<feature type="binding site" evidence="1">
    <location>
        <begin position="14"/>
        <end position="21"/>
    </location>
    <ligand>
        <name>GTP</name>
        <dbReference type="ChEBI" id="CHEBI:37565"/>
    </ligand>
</feature>
<reference key="1">
    <citation type="submission" date="2006-09" db="EMBL/GenBank/DDBJ databases">
        <authorList>
            <consortium name="The Klebsiella pneumonia Genome Sequencing Project"/>
            <person name="McClelland M."/>
            <person name="Sanderson E.K."/>
            <person name="Spieth J."/>
            <person name="Clifton W.S."/>
            <person name="Latreille P."/>
            <person name="Sabo A."/>
            <person name="Pepin K."/>
            <person name="Bhonagiri V."/>
            <person name="Porwollik S."/>
            <person name="Ali J."/>
            <person name="Wilson R.K."/>
        </authorList>
    </citation>
    <scope>NUCLEOTIDE SEQUENCE [LARGE SCALE GENOMIC DNA]</scope>
    <source>
        <strain>ATCC 700721 / MGH 78578</strain>
    </source>
</reference>